<evidence type="ECO:0000250" key="1"/>
<evidence type="ECO:0000250" key="2">
    <source>
        <dbReference type="UniProtKB" id="Q8T3C8"/>
    </source>
</evidence>
<evidence type="ECO:0000255" key="3"/>
<evidence type="ECO:0000305" key="4"/>
<evidence type="ECO:0000312" key="5">
    <source>
        <dbReference type="EMBL" id="CAS00032.1"/>
    </source>
</evidence>
<evidence type="ECO:0000312" key="6">
    <source>
        <dbReference type="WormBase" id="CBG28141"/>
    </source>
</evidence>
<name>MTFP1_CAEBR</name>
<sequence length="162" mass="18259">MSPVESSNVEKDIFRDTPVRFLGKRYANEVGEAFRSLVKPVVVKFSYVVAFGYVAADSVDKGFKESKKPHANDTEKAKRVAIIAVDTVLWQTFASVLIPGFTINRFCFFTNMLLEKSTKLPTNLRKWTVTALGLATIPFIVHPIDAFVEDAMNKTARKVYNY</sequence>
<gene>
    <name evidence="6" type="ORF">CBG28141</name>
</gene>
<keyword id="KW-0053">Apoptosis</keyword>
<keyword id="KW-0472">Membrane</keyword>
<keyword id="KW-0496">Mitochondrion</keyword>
<keyword id="KW-0999">Mitochondrion inner membrane</keyword>
<keyword id="KW-1185">Reference proteome</keyword>
<keyword id="KW-0812">Transmembrane</keyword>
<keyword id="KW-1133">Transmembrane helix</keyword>
<protein>
    <recommendedName>
        <fullName>Mitochondrial fission process protein 1</fullName>
    </recommendedName>
    <alternativeName>
        <fullName>Mitochondrial 18 kDa protein</fullName>
        <shortName evidence="2">MTP18</shortName>
    </alternativeName>
</protein>
<organism>
    <name type="scientific">Caenorhabditis briggsae</name>
    <dbReference type="NCBI Taxonomy" id="6238"/>
    <lineage>
        <taxon>Eukaryota</taxon>
        <taxon>Metazoa</taxon>
        <taxon>Ecdysozoa</taxon>
        <taxon>Nematoda</taxon>
        <taxon>Chromadorea</taxon>
        <taxon>Rhabditida</taxon>
        <taxon>Rhabditina</taxon>
        <taxon>Rhabditomorpha</taxon>
        <taxon>Rhabditoidea</taxon>
        <taxon>Rhabditidae</taxon>
        <taxon>Peloderinae</taxon>
        <taxon>Caenorhabditis</taxon>
    </lineage>
</organism>
<dbReference type="EMBL" id="HE600983">
    <property type="protein sequence ID" value="CAS00032.1"/>
    <property type="molecule type" value="Genomic_DNA"/>
</dbReference>
<dbReference type="RefSeq" id="XP_045099593.1">
    <property type="nucleotide sequence ID" value="XM_045239807.1"/>
</dbReference>
<dbReference type="FunCoup" id="B6IJ52">
    <property type="interactions" value="369"/>
</dbReference>
<dbReference type="STRING" id="6238.B6IJ52"/>
<dbReference type="GeneID" id="68919588"/>
<dbReference type="WormBase" id="CBG28141">
    <property type="protein sequence ID" value="CBP44102"/>
    <property type="gene ID" value="WBGene00164982"/>
</dbReference>
<dbReference type="eggNOG" id="KOG3945">
    <property type="taxonomic scope" value="Eukaryota"/>
</dbReference>
<dbReference type="HOGENOM" id="CLU_053720_1_0_1"/>
<dbReference type="InParanoid" id="B6IJ52"/>
<dbReference type="OMA" id="DVFTWQM"/>
<dbReference type="Proteomes" id="UP000008549">
    <property type="component" value="Unassembled WGS sequence"/>
</dbReference>
<dbReference type="GO" id="GO:0005743">
    <property type="term" value="C:mitochondrial inner membrane"/>
    <property type="evidence" value="ECO:0007669"/>
    <property type="project" value="UniProtKB-SubCell"/>
</dbReference>
<dbReference type="GO" id="GO:0005739">
    <property type="term" value="C:mitochondrion"/>
    <property type="evidence" value="ECO:0000318"/>
    <property type="project" value="GO_Central"/>
</dbReference>
<dbReference type="GO" id="GO:0006915">
    <property type="term" value="P:apoptotic process"/>
    <property type="evidence" value="ECO:0007669"/>
    <property type="project" value="UniProtKB-KW"/>
</dbReference>
<dbReference type="GO" id="GO:0000266">
    <property type="term" value="P:mitochondrial fission"/>
    <property type="evidence" value="ECO:0000318"/>
    <property type="project" value="GO_Central"/>
</dbReference>
<dbReference type="InterPro" id="IPR019560">
    <property type="entry name" value="Mitochondrial_18_kDa_protein"/>
</dbReference>
<dbReference type="PANTHER" id="PTHR11001">
    <property type="entry name" value="MITOCHONDRIAL FISSION PROCESS PROTEIN 1"/>
    <property type="match status" value="1"/>
</dbReference>
<dbReference type="PANTHER" id="PTHR11001:SF2">
    <property type="entry name" value="MITOCHONDRIAL FISSION PROCESS PROTEIN 1"/>
    <property type="match status" value="1"/>
</dbReference>
<dbReference type="Pfam" id="PF10558">
    <property type="entry name" value="MTP18"/>
    <property type="match status" value="1"/>
</dbReference>
<feature type="chain" id="PRO_0000374063" description="Mitochondrial fission process protein 1">
    <location>
        <begin position="1"/>
        <end position="162"/>
    </location>
</feature>
<feature type="transmembrane region" description="Helical" evidence="3">
    <location>
        <begin position="36"/>
        <end position="56"/>
    </location>
</feature>
<feature type="transmembrane region" description="Helical" evidence="3">
    <location>
        <begin position="81"/>
        <end position="101"/>
    </location>
</feature>
<feature type="transmembrane region" description="Helical" evidence="3">
    <location>
        <begin position="128"/>
        <end position="148"/>
    </location>
</feature>
<comment type="function">
    <text evidence="1">Involved in the mitochondrial division probably by regulating membrane fission. Loss-of-function leads to apoptosis (By similarity).</text>
</comment>
<comment type="subcellular location">
    <subcellularLocation>
        <location evidence="4">Mitochondrion inner membrane</location>
        <topology evidence="4">Multi-pass membrane protein</topology>
    </subcellularLocation>
</comment>
<comment type="similarity">
    <text evidence="4">Belongs to the MTFP1 family.</text>
</comment>
<reference evidence="5" key="1">
    <citation type="journal article" date="2003" name="PLoS Biol.">
        <title>The genome sequence of Caenorhabditis briggsae: a platform for comparative genomics.</title>
        <authorList>
            <person name="Stein L.D."/>
            <person name="Bao Z."/>
            <person name="Blasiar D."/>
            <person name="Blumenthal T."/>
            <person name="Brent M.R."/>
            <person name="Chen N."/>
            <person name="Chinwalla A."/>
            <person name="Clarke L."/>
            <person name="Clee C."/>
            <person name="Coghlan A."/>
            <person name="Coulson A."/>
            <person name="D'Eustachio P."/>
            <person name="Fitch D.H.A."/>
            <person name="Fulton L.A."/>
            <person name="Fulton R.E."/>
            <person name="Griffiths-Jones S."/>
            <person name="Harris T.W."/>
            <person name="Hillier L.W."/>
            <person name="Kamath R."/>
            <person name="Kuwabara P.E."/>
            <person name="Mardis E.R."/>
            <person name="Marra M.A."/>
            <person name="Miner T.L."/>
            <person name="Minx P."/>
            <person name="Mullikin J.C."/>
            <person name="Plumb R.W."/>
            <person name="Rogers J."/>
            <person name="Schein J.E."/>
            <person name="Sohrmann M."/>
            <person name="Spieth J."/>
            <person name="Stajich J.E."/>
            <person name="Wei C."/>
            <person name="Willey D."/>
            <person name="Wilson R.K."/>
            <person name="Durbin R.M."/>
            <person name="Waterston R.H."/>
        </authorList>
    </citation>
    <scope>NUCLEOTIDE SEQUENCE [LARGE SCALE GENOMIC DNA]</scope>
    <source>
        <strain evidence="5">AF16</strain>
    </source>
</reference>
<proteinExistence type="inferred from homology"/>
<accession>B6IJ52</accession>